<feature type="chain" id="PRO_1000023867" description="Uroporphyrinogen decarboxylase">
    <location>
        <begin position="1"/>
        <end position="354"/>
    </location>
</feature>
<feature type="binding site" evidence="1">
    <location>
        <begin position="27"/>
        <end position="31"/>
    </location>
    <ligand>
        <name>substrate</name>
    </ligand>
</feature>
<feature type="binding site" evidence="1">
    <location>
        <position position="77"/>
    </location>
    <ligand>
        <name>substrate</name>
    </ligand>
</feature>
<feature type="binding site" evidence="1">
    <location>
        <position position="154"/>
    </location>
    <ligand>
        <name>substrate</name>
    </ligand>
</feature>
<feature type="binding site" evidence="1">
    <location>
        <position position="209"/>
    </location>
    <ligand>
        <name>substrate</name>
    </ligand>
</feature>
<feature type="binding site" evidence="1">
    <location>
        <position position="327"/>
    </location>
    <ligand>
        <name>substrate</name>
    </ligand>
</feature>
<feature type="site" description="Transition state stabilizer" evidence="1">
    <location>
        <position position="77"/>
    </location>
</feature>
<protein>
    <recommendedName>
        <fullName evidence="1">Uroporphyrinogen decarboxylase</fullName>
        <shortName evidence="1">UPD</shortName>
        <shortName evidence="1">URO-D</shortName>
        <ecNumber evidence="1">4.1.1.37</ecNumber>
    </recommendedName>
</protein>
<name>DCUP_ACTP2</name>
<comment type="function">
    <text evidence="1">Catalyzes the decarboxylation of four acetate groups of uroporphyrinogen-III to yield coproporphyrinogen-III.</text>
</comment>
<comment type="catalytic activity">
    <reaction evidence="1">
        <text>uroporphyrinogen III + 4 H(+) = coproporphyrinogen III + 4 CO2</text>
        <dbReference type="Rhea" id="RHEA:19865"/>
        <dbReference type="ChEBI" id="CHEBI:15378"/>
        <dbReference type="ChEBI" id="CHEBI:16526"/>
        <dbReference type="ChEBI" id="CHEBI:57308"/>
        <dbReference type="ChEBI" id="CHEBI:57309"/>
        <dbReference type="EC" id="4.1.1.37"/>
    </reaction>
</comment>
<comment type="pathway">
    <text evidence="1">Porphyrin-containing compound metabolism; protoporphyrin-IX biosynthesis; coproporphyrinogen-III from 5-aminolevulinate: step 4/4.</text>
</comment>
<comment type="subunit">
    <text evidence="1">Homodimer.</text>
</comment>
<comment type="subcellular location">
    <subcellularLocation>
        <location evidence="1">Cytoplasm</location>
    </subcellularLocation>
</comment>
<comment type="similarity">
    <text evidence="1">Belongs to the uroporphyrinogen decarboxylase family.</text>
</comment>
<accession>A3MYI4</accession>
<gene>
    <name evidence="1" type="primary">hemE</name>
    <name type="ordered locus">APL_0112</name>
</gene>
<sequence>MNQLKNDRYLKALLREPVDMTPVWMMRQAGRYLPEYKATRAEAGDFMALCRNADLACEVTLQPLRRYALDAAILFSDILTVPDAMGLGLSFGAGEGPKFARPIENKAQVDNLPIPDPESELQYVMNAVRTIRRELKGEVPLIGFSGSPWTLATYMVEGGSSKAFTKIKKMMYADPKILHALLDKLADSVILYLNAQIKAGAQAVMVFDTWGGVLAHNEYKEFSLRYMHKIVDGLIRENEGRKVPVTLFTKGGGLWLEAIAETGCDAVGLDWTVDIADARRRVGHKVALQGNMDPSVLYAQPERIELEVKQILAGFGQGSGHVFNLGHGIHQDVPEQSPKVFVDAVHEYSKQYHK</sequence>
<evidence type="ECO:0000255" key="1">
    <source>
        <dbReference type="HAMAP-Rule" id="MF_00218"/>
    </source>
</evidence>
<organism>
    <name type="scientific">Actinobacillus pleuropneumoniae serotype 5b (strain L20)</name>
    <dbReference type="NCBI Taxonomy" id="416269"/>
    <lineage>
        <taxon>Bacteria</taxon>
        <taxon>Pseudomonadati</taxon>
        <taxon>Pseudomonadota</taxon>
        <taxon>Gammaproteobacteria</taxon>
        <taxon>Pasteurellales</taxon>
        <taxon>Pasteurellaceae</taxon>
        <taxon>Actinobacillus</taxon>
    </lineage>
</organism>
<reference key="1">
    <citation type="journal article" date="2008" name="J. Bacteriol.">
        <title>The complete genome sequence of Actinobacillus pleuropneumoniae L20 (serotype 5b).</title>
        <authorList>
            <person name="Foote S.J."/>
            <person name="Bosse J.T."/>
            <person name="Bouevitch A.B."/>
            <person name="Langford P.R."/>
            <person name="Young N.M."/>
            <person name="Nash J.H.E."/>
        </authorList>
    </citation>
    <scope>NUCLEOTIDE SEQUENCE [LARGE SCALE GENOMIC DNA]</scope>
    <source>
        <strain>L20</strain>
    </source>
</reference>
<proteinExistence type="inferred from homology"/>
<dbReference type="EC" id="4.1.1.37" evidence="1"/>
<dbReference type="EMBL" id="CP000569">
    <property type="protein sequence ID" value="ABN73220.1"/>
    <property type="molecule type" value="Genomic_DNA"/>
</dbReference>
<dbReference type="RefSeq" id="WP_005616604.1">
    <property type="nucleotide sequence ID" value="NC_009053.1"/>
</dbReference>
<dbReference type="SMR" id="A3MYI4"/>
<dbReference type="STRING" id="416269.APL_0112"/>
<dbReference type="EnsemblBacteria" id="ABN73220">
    <property type="protein sequence ID" value="ABN73220"/>
    <property type="gene ID" value="APL_0112"/>
</dbReference>
<dbReference type="KEGG" id="apl:APL_0112"/>
<dbReference type="eggNOG" id="COG0407">
    <property type="taxonomic scope" value="Bacteria"/>
</dbReference>
<dbReference type="HOGENOM" id="CLU_040933_0_0_6"/>
<dbReference type="UniPathway" id="UPA00251">
    <property type="reaction ID" value="UER00321"/>
</dbReference>
<dbReference type="Proteomes" id="UP000001432">
    <property type="component" value="Chromosome"/>
</dbReference>
<dbReference type="GO" id="GO:0005829">
    <property type="term" value="C:cytosol"/>
    <property type="evidence" value="ECO:0007669"/>
    <property type="project" value="TreeGrafter"/>
</dbReference>
<dbReference type="GO" id="GO:0004853">
    <property type="term" value="F:uroporphyrinogen decarboxylase activity"/>
    <property type="evidence" value="ECO:0007669"/>
    <property type="project" value="UniProtKB-UniRule"/>
</dbReference>
<dbReference type="GO" id="GO:0019353">
    <property type="term" value="P:protoporphyrinogen IX biosynthetic process from glutamate"/>
    <property type="evidence" value="ECO:0007669"/>
    <property type="project" value="TreeGrafter"/>
</dbReference>
<dbReference type="CDD" id="cd00717">
    <property type="entry name" value="URO-D"/>
    <property type="match status" value="1"/>
</dbReference>
<dbReference type="FunFam" id="3.20.20.210:FF:000001">
    <property type="entry name" value="Uroporphyrinogen decarboxylase"/>
    <property type="match status" value="1"/>
</dbReference>
<dbReference type="Gene3D" id="3.20.20.210">
    <property type="match status" value="1"/>
</dbReference>
<dbReference type="HAMAP" id="MF_00218">
    <property type="entry name" value="URO_D"/>
    <property type="match status" value="1"/>
</dbReference>
<dbReference type="InterPro" id="IPR038071">
    <property type="entry name" value="UROD/MetE-like_sf"/>
</dbReference>
<dbReference type="InterPro" id="IPR006361">
    <property type="entry name" value="Uroporphyrinogen_deCO2ase_HemE"/>
</dbReference>
<dbReference type="InterPro" id="IPR000257">
    <property type="entry name" value="Uroporphyrinogen_deCOase"/>
</dbReference>
<dbReference type="NCBIfam" id="TIGR01464">
    <property type="entry name" value="hemE"/>
    <property type="match status" value="1"/>
</dbReference>
<dbReference type="PANTHER" id="PTHR21091">
    <property type="entry name" value="METHYLTETRAHYDROFOLATE:HOMOCYSTEINE METHYLTRANSFERASE RELATED"/>
    <property type="match status" value="1"/>
</dbReference>
<dbReference type="PANTHER" id="PTHR21091:SF169">
    <property type="entry name" value="UROPORPHYRINOGEN DECARBOXYLASE"/>
    <property type="match status" value="1"/>
</dbReference>
<dbReference type="Pfam" id="PF01208">
    <property type="entry name" value="URO-D"/>
    <property type="match status" value="1"/>
</dbReference>
<dbReference type="SUPFAM" id="SSF51726">
    <property type="entry name" value="UROD/MetE-like"/>
    <property type="match status" value="1"/>
</dbReference>
<dbReference type="PROSITE" id="PS00906">
    <property type="entry name" value="UROD_1"/>
    <property type="match status" value="1"/>
</dbReference>
<dbReference type="PROSITE" id="PS00907">
    <property type="entry name" value="UROD_2"/>
    <property type="match status" value="1"/>
</dbReference>
<keyword id="KW-0963">Cytoplasm</keyword>
<keyword id="KW-0210">Decarboxylase</keyword>
<keyword id="KW-0456">Lyase</keyword>
<keyword id="KW-0627">Porphyrin biosynthesis</keyword>
<keyword id="KW-1185">Reference proteome</keyword>